<name>TAGX_STAAN</name>
<protein>
    <recommendedName>
        <fullName>Putative glycosyltransferase TagX</fullName>
        <ecNumber>2.4.-.-</ecNumber>
    </recommendedName>
    <alternativeName>
        <fullName>Teichoic acid biosynthesis protein X</fullName>
    </alternativeName>
</protein>
<comment type="similarity">
    <text evidence="1">Belongs to the glycosyltransferase 2 family.</text>
</comment>
<comment type="sequence caution" evidence="1">
    <conflict type="erroneous initiation">
        <sequence resource="EMBL-CDS" id="BAB41828"/>
    </conflict>
</comment>
<gene>
    <name type="primary">tagX</name>
    <name type="ordered locus">SA0596</name>
</gene>
<keyword id="KW-0133">Cell shape</keyword>
<keyword id="KW-0961">Cell wall biogenesis/degradation</keyword>
<keyword id="KW-0328">Glycosyltransferase</keyword>
<keyword id="KW-0777">Teichoic acid biosynthesis</keyword>
<keyword id="KW-0808">Transferase</keyword>
<evidence type="ECO:0000305" key="1"/>
<accession>Q7A711</accession>
<proteinExistence type="evidence at protein level"/>
<organism>
    <name type="scientific">Staphylococcus aureus (strain N315)</name>
    <dbReference type="NCBI Taxonomy" id="158879"/>
    <lineage>
        <taxon>Bacteria</taxon>
        <taxon>Bacillati</taxon>
        <taxon>Bacillota</taxon>
        <taxon>Bacilli</taxon>
        <taxon>Bacillales</taxon>
        <taxon>Staphylococcaceae</taxon>
        <taxon>Staphylococcus</taxon>
    </lineage>
</organism>
<reference key="1">
    <citation type="journal article" date="2001" name="Lancet">
        <title>Whole genome sequencing of meticillin-resistant Staphylococcus aureus.</title>
        <authorList>
            <person name="Kuroda M."/>
            <person name="Ohta T."/>
            <person name="Uchiyama I."/>
            <person name="Baba T."/>
            <person name="Yuzawa H."/>
            <person name="Kobayashi I."/>
            <person name="Cui L."/>
            <person name="Oguchi A."/>
            <person name="Aoki K."/>
            <person name="Nagai Y."/>
            <person name="Lian J.-Q."/>
            <person name="Ito T."/>
            <person name="Kanamori M."/>
            <person name="Matsumaru H."/>
            <person name="Maruyama A."/>
            <person name="Murakami H."/>
            <person name="Hosoyama A."/>
            <person name="Mizutani-Ui Y."/>
            <person name="Takahashi N.K."/>
            <person name="Sawano T."/>
            <person name="Inoue R."/>
            <person name="Kaito C."/>
            <person name="Sekimizu K."/>
            <person name="Hirakawa H."/>
            <person name="Kuhara S."/>
            <person name="Goto S."/>
            <person name="Yabuzaki J."/>
            <person name="Kanehisa M."/>
            <person name="Yamashita A."/>
            <person name="Oshima K."/>
            <person name="Furuya K."/>
            <person name="Yoshino C."/>
            <person name="Shiba T."/>
            <person name="Hattori M."/>
            <person name="Ogasawara N."/>
            <person name="Hayashi H."/>
            <person name="Hiramatsu K."/>
        </authorList>
    </citation>
    <scope>NUCLEOTIDE SEQUENCE [LARGE SCALE GENOMIC DNA]</scope>
    <source>
        <strain>N315</strain>
    </source>
</reference>
<reference key="2">
    <citation type="submission" date="2007-10" db="UniProtKB">
        <title>Shotgun proteomic analysis of total and membrane protein extracts of S. aureus strain N315.</title>
        <authorList>
            <person name="Vaezzadeh A.R."/>
            <person name="Deshusses J."/>
            <person name="Lescuyer P."/>
            <person name="Hochstrasser D.F."/>
        </authorList>
    </citation>
    <scope>IDENTIFICATION BY MASS SPECTROMETRY [LARGE SCALE ANALYSIS]</scope>
    <source>
        <strain>N315</strain>
    </source>
</reference>
<sequence>MRLTIIIPTCNNEATIRQLLISIESKEHYRILCIDGGSTDQTIPMIERLQRELKHISLIQLQNASIATCINKGLMDIKMTDPHDSDAFMVINPTSIVLPGKLDRLTAAFKNNDNIDMVIGQRAYNYHGEWKLKSADEFIKDNRIVTLTEQPDLLSMMSFDGKLFSAKFAELQCDETLANTYNHAILVKAMQKATDIHLVSQMIVGDNDIDTHATSNDEDFNRYIIEIMKIRQRVMEMLLLPEQRLLYSDMVDRILFNNSLKYYMNEHPAVTHTTIQLVKDYIMSMQHSDYVSQNMFDIINTVEFIGENWDREIYELWRQTLIQVGINRPTYKKFLIQLKGRKFAHRTKSMLKR</sequence>
<feature type="chain" id="PRO_0000059225" description="Putative glycosyltransferase TagX">
    <location>
        <begin position="1"/>
        <end position="353"/>
    </location>
</feature>
<dbReference type="EC" id="2.4.-.-"/>
<dbReference type="EMBL" id="BA000018">
    <property type="protein sequence ID" value="BAB41828.1"/>
    <property type="status" value="ALT_INIT"/>
    <property type="molecule type" value="Genomic_DNA"/>
</dbReference>
<dbReference type="PIR" id="A89834">
    <property type="entry name" value="A89834"/>
</dbReference>
<dbReference type="RefSeq" id="WP_001241182.1">
    <property type="nucleotide sequence ID" value="NC_002745.2"/>
</dbReference>
<dbReference type="SMR" id="Q7A711"/>
<dbReference type="CAZy" id="GT2">
    <property type="family name" value="Glycosyltransferase Family 2"/>
</dbReference>
<dbReference type="EnsemblBacteria" id="BAB41828">
    <property type="protein sequence ID" value="BAB41828"/>
    <property type="gene ID" value="BAB41828"/>
</dbReference>
<dbReference type="KEGG" id="sau:SA0596"/>
<dbReference type="HOGENOM" id="CLU_067098_0_0_9"/>
<dbReference type="GO" id="GO:0016757">
    <property type="term" value="F:glycosyltransferase activity"/>
    <property type="evidence" value="ECO:0007669"/>
    <property type="project" value="UniProtKB-KW"/>
</dbReference>
<dbReference type="GO" id="GO:0071555">
    <property type="term" value="P:cell wall organization"/>
    <property type="evidence" value="ECO:0007669"/>
    <property type="project" value="UniProtKB-KW"/>
</dbReference>
<dbReference type="GO" id="GO:0008360">
    <property type="term" value="P:regulation of cell shape"/>
    <property type="evidence" value="ECO:0007669"/>
    <property type="project" value="UniProtKB-KW"/>
</dbReference>
<dbReference type="GO" id="GO:0019350">
    <property type="term" value="P:teichoic acid biosynthetic process"/>
    <property type="evidence" value="ECO:0007669"/>
    <property type="project" value="UniProtKB-KW"/>
</dbReference>
<dbReference type="CDD" id="cd00761">
    <property type="entry name" value="Glyco_tranf_GTA_type"/>
    <property type="match status" value="1"/>
</dbReference>
<dbReference type="Gene3D" id="3.90.550.10">
    <property type="entry name" value="Spore Coat Polysaccharide Biosynthesis Protein SpsA, Chain A"/>
    <property type="match status" value="1"/>
</dbReference>
<dbReference type="InterPro" id="IPR001173">
    <property type="entry name" value="Glyco_trans_2-like"/>
</dbReference>
<dbReference type="InterPro" id="IPR050834">
    <property type="entry name" value="Glycosyltransf_2"/>
</dbReference>
<dbReference type="InterPro" id="IPR029044">
    <property type="entry name" value="Nucleotide-diphossugar_trans"/>
</dbReference>
<dbReference type="PANTHER" id="PTHR43685">
    <property type="entry name" value="GLYCOSYLTRANSFERASE"/>
    <property type="match status" value="1"/>
</dbReference>
<dbReference type="PANTHER" id="PTHR43685:SF11">
    <property type="entry name" value="GLYCOSYLTRANSFERASE TAGX-RELATED"/>
    <property type="match status" value="1"/>
</dbReference>
<dbReference type="Pfam" id="PF00535">
    <property type="entry name" value="Glycos_transf_2"/>
    <property type="match status" value="1"/>
</dbReference>
<dbReference type="SUPFAM" id="SSF53448">
    <property type="entry name" value="Nucleotide-diphospho-sugar transferases"/>
    <property type="match status" value="1"/>
</dbReference>